<evidence type="ECO:0000255" key="1">
    <source>
        <dbReference type="HAMAP-Rule" id="MF_00113"/>
    </source>
</evidence>
<reference key="1">
    <citation type="journal article" date="2006" name="Proc. Natl. Acad. Sci. U.S.A.">
        <title>Molecular genetic anatomy of inter- and intraserotype variation in the human bacterial pathogen group A Streptococcus.</title>
        <authorList>
            <person name="Beres S.B."/>
            <person name="Richter E.W."/>
            <person name="Nagiec M.J."/>
            <person name="Sumby P."/>
            <person name="Porcella S.F."/>
            <person name="DeLeo F.R."/>
            <person name="Musser J.M."/>
        </authorList>
    </citation>
    <scope>NUCLEOTIDE SEQUENCE [LARGE SCALE GENOMIC DNA]</scope>
    <source>
        <strain>MGAS2096</strain>
    </source>
</reference>
<proteinExistence type="inferred from homology"/>
<dbReference type="EC" id="2.4.99.17" evidence="1"/>
<dbReference type="EMBL" id="CP000261">
    <property type="protein sequence ID" value="ABF36258.1"/>
    <property type="molecule type" value="Genomic_DNA"/>
</dbReference>
<dbReference type="SMR" id="Q1JB00"/>
<dbReference type="KEGG" id="spj:MGAS2096_Spy1206"/>
<dbReference type="HOGENOM" id="CLU_039110_1_0_9"/>
<dbReference type="UniPathway" id="UPA00392"/>
<dbReference type="GO" id="GO:0005737">
    <property type="term" value="C:cytoplasm"/>
    <property type="evidence" value="ECO:0007669"/>
    <property type="project" value="UniProtKB-SubCell"/>
</dbReference>
<dbReference type="GO" id="GO:0051075">
    <property type="term" value="F:S-adenosylmethionine:tRNA ribosyltransferase-isomerase activity"/>
    <property type="evidence" value="ECO:0007669"/>
    <property type="project" value="UniProtKB-EC"/>
</dbReference>
<dbReference type="GO" id="GO:0008616">
    <property type="term" value="P:queuosine biosynthetic process"/>
    <property type="evidence" value="ECO:0007669"/>
    <property type="project" value="UniProtKB-UniRule"/>
</dbReference>
<dbReference type="GO" id="GO:0002099">
    <property type="term" value="P:tRNA wobble guanine modification"/>
    <property type="evidence" value="ECO:0007669"/>
    <property type="project" value="TreeGrafter"/>
</dbReference>
<dbReference type="FunFam" id="2.40.10.240:FF:000002">
    <property type="entry name" value="S-adenosylmethionine:tRNA ribosyltransferase-isomerase"/>
    <property type="match status" value="1"/>
</dbReference>
<dbReference type="FunFam" id="3.40.1780.10:FF:000001">
    <property type="entry name" value="S-adenosylmethionine:tRNA ribosyltransferase-isomerase"/>
    <property type="match status" value="1"/>
</dbReference>
<dbReference type="Gene3D" id="2.40.10.240">
    <property type="entry name" value="QueA-like"/>
    <property type="match status" value="1"/>
</dbReference>
<dbReference type="Gene3D" id="3.40.1780.10">
    <property type="entry name" value="QueA-like"/>
    <property type="match status" value="1"/>
</dbReference>
<dbReference type="HAMAP" id="MF_00113">
    <property type="entry name" value="QueA"/>
    <property type="match status" value="1"/>
</dbReference>
<dbReference type="InterPro" id="IPR003699">
    <property type="entry name" value="QueA"/>
</dbReference>
<dbReference type="InterPro" id="IPR042118">
    <property type="entry name" value="QueA_dom1"/>
</dbReference>
<dbReference type="InterPro" id="IPR042119">
    <property type="entry name" value="QueA_dom2"/>
</dbReference>
<dbReference type="InterPro" id="IPR036100">
    <property type="entry name" value="QueA_sf"/>
</dbReference>
<dbReference type="NCBIfam" id="NF001140">
    <property type="entry name" value="PRK00147.1"/>
    <property type="match status" value="1"/>
</dbReference>
<dbReference type="NCBIfam" id="TIGR00113">
    <property type="entry name" value="queA"/>
    <property type="match status" value="1"/>
</dbReference>
<dbReference type="PANTHER" id="PTHR30307">
    <property type="entry name" value="S-ADENOSYLMETHIONINE:TRNA RIBOSYLTRANSFERASE-ISOMERASE"/>
    <property type="match status" value="1"/>
</dbReference>
<dbReference type="PANTHER" id="PTHR30307:SF0">
    <property type="entry name" value="S-ADENOSYLMETHIONINE:TRNA RIBOSYLTRANSFERASE-ISOMERASE"/>
    <property type="match status" value="1"/>
</dbReference>
<dbReference type="Pfam" id="PF02547">
    <property type="entry name" value="Queuosine_synth"/>
    <property type="match status" value="1"/>
</dbReference>
<dbReference type="SUPFAM" id="SSF111337">
    <property type="entry name" value="QueA-like"/>
    <property type="match status" value="1"/>
</dbReference>
<name>QUEA_STRPB</name>
<organism>
    <name type="scientific">Streptococcus pyogenes serotype M12 (strain MGAS2096)</name>
    <dbReference type="NCBI Taxonomy" id="370553"/>
    <lineage>
        <taxon>Bacteria</taxon>
        <taxon>Bacillati</taxon>
        <taxon>Bacillota</taxon>
        <taxon>Bacilli</taxon>
        <taxon>Lactobacillales</taxon>
        <taxon>Streptococcaceae</taxon>
        <taxon>Streptococcus</taxon>
    </lineage>
</organism>
<comment type="function">
    <text evidence="1">Transfers and isomerizes the ribose moiety from AdoMet to the 7-aminomethyl group of 7-deazaguanine (preQ1-tRNA) to give epoxyqueuosine (oQ-tRNA).</text>
</comment>
<comment type="catalytic activity">
    <reaction evidence="1">
        <text>7-aminomethyl-7-carbaguanosine(34) in tRNA + S-adenosyl-L-methionine = epoxyqueuosine(34) in tRNA + adenine + L-methionine + 2 H(+)</text>
        <dbReference type="Rhea" id="RHEA:32155"/>
        <dbReference type="Rhea" id="RHEA-COMP:10342"/>
        <dbReference type="Rhea" id="RHEA-COMP:18582"/>
        <dbReference type="ChEBI" id="CHEBI:15378"/>
        <dbReference type="ChEBI" id="CHEBI:16708"/>
        <dbReference type="ChEBI" id="CHEBI:57844"/>
        <dbReference type="ChEBI" id="CHEBI:59789"/>
        <dbReference type="ChEBI" id="CHEBI:82833"/>
        <dbReference type="ChEBI" id="CHEBI:194443"/>
        <dbReference type="EC" id="2.4.99.17"/>
    </reaction>
</comment>
<comment type="pathway">
    <text evidence="1">tRNA modification; tRNA-queuosine biosynthesis.</text>
</comment>
<comment type="subunit">
    <text evidence="1">Monomer.</text>
</comment>
<comment type="subcellular location">
    <subcellularLocation>
        <location evidence="1">Cytoplasm</location>
    </subcellularLocation>
</comment>
<comment type="similarity">
    <text evidence="1">Belongs to the QueA family.</text>
</comment>
<protein>
    <recommendedName>
        <fullName evidence="1">S-adenosylmethionine:tRNA ribosyltransferase-isomerase</fullName>
        <ecNumber evidence="1">2.4.99.17</ecNumber>
    </recommendedName>
    <alternativeName>
        <fullName evidence="1">Queuosine biosynthesis protein QueA</fullName>
    </alternativeName>
</protein>
<feature type="chain" id="PRO_1000015289" description="S-adenosylmethionine:tRNA ribosyltransferase-isomerase">
    <location>
        <begin position="1"/>
        <end position="342"/>
    </location>
</feature>
<gene>
    <name evidence="1" type="primary">queA</name>
    <name type="ordered locus">MGAS2096_Spy1206</name>
</gene>
<sequence length="342" mass="38352">MNTNDFDFELPEELIAQTPLEKRDSSKLLIIDHRQKTMVDSHFDHIIDQLNPGDALVMNNTRVLPARLYGEKPDTHGHVELLLLKNTQGDQWEVLAKPAKRLKVGSQVNFGDGRLKATIIDELEHGGRIVEFSYDGIFLEVLESLGEMPLPPYIHEKLEDAERYQTVYAKENGSAAAPTAGLHFTTDLLKKIEAKGVHLVYLTLHVGLGTFRPVSVDNLDEHDMHSEFYSLSEEAAQTLRDVKQAGGRVVAVGTTSIRTLETIGGKFQGDIQADSGWTNIFIKPGYQFKVVDAFSTNFHLPKSTLVMLVSAFAGRDFVLEAYRHAVDEKYRFFSFGDAMFVN</sequence>
<keyword id="KW-0963">Cytoplasm</keyword>
<keyword id="KW-0671">Queuosine biosynthesis</keyword>
<keyword id="KW-0949">S-adenosyl-L-methionine</keyword>
<keyword id="KW-0808">Transferase</keyword>
<accession>Q1JB00</accession>